<gene>
    <name type="primary">CCT8</name>
    <name type="ordered locus">YJL008C</name>
    <name type="ORF">J1374</name>
</gene>
<dbReference type="EMBL" id="Z49284">
    <property type="protein sequence ID" value="CAA89300.1"/>
    <property type="molecule type" value="Genomic_DNA"/>
</dbReference>
<dbReference type="EMBL" id="BK006943">
    <property type="protein sequence ID" value="DAA08784.1"/>
    <property type="molecule type" value="Genomic_DNA"/>
</dbReference>
<dbReference type="PIR" id="S56779">
    <property type="entry name" value="S56779"/>
</dbReference>
<dbReference type="RefSeq" id="NP_012526.1">
    <property type="nucleotide sequence ID" value="NM_001181442.2"/>
</dbReference>
<dbReference type="PDB" id="4V81">
    <property type="method" value="X-ray"/>
    <property type="resolution" value="3.80 A"/>
    <property type="chains" value="H/P/h/p=1-568"/>
</dbReference>
<dbReference type="PDB" id="4V8R">
    <property type="method" value="X-ray"/>
    <property type="resolution" value="3.80 A"/>
    <property type="chains" value="AQ/Aq/BQ/Bq=1-568"/>
</dbReference>
<dbReference type="PDB" id="4V94">
    <property type="method" value="X-ray"/>
    <property type="resolution" value="3.80 A"/>
    <property type="chains" value="H/P/h/p=1-568"/>
</dbReference>
<dbReference type="PDB" id="5GW4">
    <property type="method" value="EM"/>
    <property type="resolution" value="4.70 A"/>
    <property type="chains" value="Q/q=1-568"/>
</dbReference>
<dbReference type="PDB" id="5GW5">
    <property type="method" value="EM"/>
    <property type="resolution" value="4.60 A"/>
    <property type="chains" value="Q/q=1-568"/>
</dbReference>
<dbReference type="PDB" id="6KRD">
    <property type="method" value="EM"/>
    <property type="resolution" value="4.38 A"/>
    <property type="chains" value="Q/q=1-568"/>
</dbReference>
<dbReference type="PDB" id="6KRE">
    <property type="method" value="EM"/>
    <property type="resolution" value="4.45 A"/>
    <property type="chains" value="Q/q=1-568"/>
</dbReference>
<dbReference type="PDB" id="6KS6">
    <property type="method" value="EM"/>
    <property type="resolution" value="2.99 A"/>
    <property type="chains" value="Q/q=1-568"/>
</dbReference>
<dbReference type="PDB" id="6KS7">
    <property type="method" value="EM"/>
    <property type="resolution" value="4.62 A"/>
    <property type="chains" value="Q/q=1-568"/>
</dbReference>
<dbReference type="PDB" id="6KS8">
    <property type="method" value="EM"/>
    <property type="resolution" value="4.69 A"/>
    <property type="chains" value="Q/q=1-568"/>
</dbReference>
<dbReference type="PDB" id="7YLU">
    <property type="method" value="EM"/>
    <property type="resolution" value="4.55 A"/>
    <property type="chains" value="Q/q=1-568"/>
</dbReference>
<dbReference type="PDB" id="7YLV">
    <property type="method" value="EM"/>
    <property type="resolution" value="3.91 A"/>
    <property type="chains" value="Q/q=1-568"/>
</dbReference>
<dbReference type="PDB" id="7YLW">
    <property type="method" value="EM"/>
    <property type="resolution" value="3.39 A"/>
    <property type="chains" value="Q/q=1-568"/>
</dbReference>
<dbReference type="PDB" id="7YLX">
    <property type="method" value="EM"/>
    <property type="resolution" value="3.20 A"/>
    <property type="chains" value="Q/q=1-568"/>
</dbReference>
<dbReference type="PDB" id="7YLY">
    <property type="method" value="EM"/>
    <property type="resolution" value="3.05 A"/>
    <property type="chains" value="Q/q=1-568"/>
</dbReference>
<dbReference type="PDB" id="9CR2">
    <property type="method" value="EM"/>
    <property type="resolution" value="4.80 A"/>
    <property type="chains" value="Q/q=1-568"/>
</dbReference>
<dbReference type="PDB" id="9CS3">
    <property type="method" value="EM"/>
    <property type="resolution" value="5.60 A"/>
    <property type="chains" value="Q/q=1-568"/>
</dbReference>
<dbReference type="PDB" id="9CS4">
    <property type="method" value="EM"/>
    <property type="resolution" value="6.80 A"/>
    <property type="chains" value="Q/q=1-568"/>
</dbReference>
<dbReference type="PDB" id="9CS6">
    <property type="method" value="EM"/>
    <property type="resolution" value="4.10 A"/>
    <property type="chains" value="Q/q=1-568"/>
</dbReference>
<dbReference type="PDB" id="9CSA">
    <property type="method" value="EM"/>
    <property type="resolution" value="3.60 A"/>
    <property type="chains" value="Q/q=1-568"/>
</dbReference>
<dbReference type="PDBsum" id="4V81"/>
<dbReference type="PDBsum" id="4V8R"/>
<dbReference type="PDBsum" id="4V94"/>
<dbReference type="PDBsum" id="5GW4"/>
<dbReference type="PDBsum" id="5GW5"/>
<dbReference type="PDBsum" id="6KRD"/>
<dbReference type="PDBsum" id="6KRE"/>
<dbReference type="PDBsum" id="6KS6"/>
<dbReference type="PDBsum" id="6KS7"/>
<dbReference type="PDBsum" id="6KS8"/>
<dbReference type="PDBsum" id="7YLU"/>
<dbReference type="PDBsum" id="7YLV"/>
<dbReference type="PDBsum" id="7YLW"/>
<dbReference type="PDBsum" id="7YLX"/>
<dbReference type="PDBsum" id="7YLY"/>
<dbReference type="PDBsum" id="9CR2"/>
<dbReference type="PDBsum" id="9CS3"/>
<dbReference type="PDBsum" id="9CS4"/>
<dbReference type="PDBsum" id="9CS6"/>
<dbReference type="PDBsum" id="9CSA"/>
<dbReference type="EMDB" id="EMD-0756"/>
<dbReference type="EMDB" id="EMD-0757"/>
<dbReference type="EMDB" id="EMD-0758"/>
<dbReference type="EMDB" id="EMD-0759"/>
<dbReference type="EMDB" id="EMD-0760"/>
<dbReference type="EMDB" id="EMD-33917"/>
<dbReference type="EMDB" id="EMD-33918"/>
<dbReference type="EMDB" id="EMD-33919"/>
<dbReference type="EMDB" id="EMD-33920"/>
<dbReference type="EMDB" id="EMD-33921"/>
<dbReference type="EMDB" id="EMD-45830"/>
<dbReference type="EMDB" id="EMD-45886"/>
<dbReference type="EMDB" id="EMD-45887"/>
<dbReference type="EMDB" id="EMD-45888"/>
<dbReference type="EMDB" id="EMD-45889"/>
<dbReference type="EMDB" id="EMD-6902"/>
<dbReference type="EMDB" id="EMD-9540"/>
<dbReference type="EMDB" id="EMD-9541"/>
<dbReference type="SMR" id="P47079"/>
<dbReference type="BioGRID" id="33748">
    <property type="interactions" value="453"/>
</dbReference>
<dbReference type="ComplexPortal" id="CPX-2156">
    <property type="entry name" value="Chaperonin-containing T-complex"/>
</dbReference>
<dbReference type="DIP" id="DIP-2697N"/>
<dbReference type="FunCoup" id="P47079">
    <property type="interactions" value="1975"/>
</dbReference>
<dbReference type="IntAct" id="P47079">
    <property type="interactions" value="127"/>
</dbReference>
<dbReference type="MINT" id="P47079"/>
<dbReference type="STRING" id="4932.YJL008C"/>
<dbReference type="iPTMnet" id="P47079"/>
<dbReference type="PaxDb" id="4932-YJL008C"/>
<dbReference type="PeptideAtlas" id="P47079"/>
<dbReference type="DNASU" id="853447"/>
<dbReference type="EnsemblFungi" id="YJL008C_mRNA">
    <property type="protein sequence ID" value="YJL008C"/>
    <property type="gene ID" value="YJL008C"/>
</dbReference>
<dbReference type="GeneID" id="853447"/>
<dbReference type="KEGG" id="sce:YJL008C"/>
<dbReference type="AGR" id="SGD:S000003545"/>
<dbReference type="SGD" id="S000003545">
    <property type="gene designation" value="CCT8"/>
</dbReference>
<dbReference type="VEuPathDB" id="FungiDB:YJL008C"/>
<dbReference type="eggNOG" id="KOG0362">
    <property type="taxonomic scope" value="Eukaryota"/>
</dbReference>
<dbReference type="GeneTree" id="ENSGT00550000074783"/>
<dbReference type="HOGENOM" id="CLU_008891_4_2_1"/>
<dbReference type="InParanoid" id="P47079"/>
<dbReference type="OMA" id="WGLKYAV"/>
<dbReference type="OrthoDB" id="1748577at2759"/>
<dbReference type="BioCyc" id="YEAST:G3O-31485-MONOMER"/>
<dbReference type="BRENDA" id="3.6.4.B10">
    <property type="organism ID" value="984"/>
</dbReference>
<dbReference type="Reactome" id="R-SCE-390471">
    <property type="pathway name" value="Association of TriC/CCT with target proteins during biosynthesis"/>
</dbReference>
<dbReference type="Reactome" id="R-SCE-6798695">
    <property type="pathway name" value="Neutrophil degranulation"/>
</dbReference>
<dbReference type="Reactome" id="R-SCE-6814122">
    <property type="pathway name" value="Cooperation of PDCL (PhLP1) and TRiC/CCT in G-protein beta folding"/>
</dbReference>
<dbReference type="BioGRID-ORCS" id="853447">
    <property type="hits" value="4 hits in 10 CRISPR screens"/>
</dbReference>
<dbReference type="CD-CODE" id="E03F929F">
    <property type="entry name" value="Stress granule"/>
</dbReference>
<dbReference type="PRO" id="PR:P47079"/>
<dbReference type="Proteomes" id="UP000002311">
    <property type="component" value="Chromosome X"/>
</dbReference>
<dbReference type="RNAct" id="P47079">
    <property type="molecule type" value="protein"/>
</dbReference>
<dbReference type="GO" id="GO:0005832">
    <property type="term" value="C:chaperonin-containing T-complex"/>
    <property type="evidence" value="ECO:0000314"/>
    <property type="project" value="SGD"/>
</dbReference>
<dbReference type="GO" id="GO:0005737">
    <property type="term" value="C:cytoplasm"/>
    <property type="evidence" value="ECO:0007005"/>
    <property type="project" value="SGD"/>
</dbReference>
<dbReference type="GO" id="GO:0005524">
    <property type="term" value="F:ATP binding"/>
    <property type="evidence" value="ECO:0007669"/>
    <property type="project" value="UniProtKB-KW"/>
</dbReference>
<dbReference type="GO" id="GO:0016887">
    <property type="term" value="F:ATP hydrolysis activity"/>
    <property type="evidence" value="ECO:0007669"/>
    <property type="project" value="InterPro"/>
</dbReference>
<dbReference type="GO" id="GO:0140662">
    <property type="term" value="F:ATP-dependent protein folding chaperone"/>
    <property type="evidence" value="ECO:0007669"/>
    <property type="project" value="InterPro"/>
</dbReference>
<dbReference type="GO" id="GO:0051082">
    <property type="term" value="F:unfolded protein binding"/>
    <property type="evidence" value="ECO:0000314"/>
    <property type="project" value="SGD"/>
</dbReference>
<dbReference type="GO" id="GO:0051086">
    <property type="term" value="P:chaperone mediated protein folding independent of cofactor"/>
    <property type="evidence" value="ECO:0000314"/>
    <property type="project" value="ComplexPortal"/>
</dbReference>
<dbReference type="GO" id="GO:0006457">
    <property type="term" value="P:protein folding"/>
    <property type="evidence" value="ECO:0000314"/>
    <property type="project" value="SGD"/>
</dbReference>
<dbReference type="CDD" id="cd03341">
    <property type="entry name" value="TCP1_theta"/>
    <property type="match status" value="1"/>
</dbReference>
<dbReference type="FunFam" id="3.50.7.10:FF:000008">
    <property type="entry name" value="T-complex protein 1 subunit theta"/>
    <property type="match status" value="1"/>
</dbReference>
<dbReference type="Gene3D" id="3.50.7.10">
    <property type="entry name" value="GroEL"/>
    <property type="match status" value="1"/>
</dbReference>
<dbReference type="Gene3D" id="1.10.560.10">
    <property type="entry name" value="GroEL-like equatorial domain"/>
    <property type="match status" value="1"/>
</dbReference>
<dbReference type="Gene3D" id="3.30.260.10">
    <property type="entry name" value="TCP-1-like chaperonin intermediate domain"/>
    <property type="match status" value="1"/>
</dbReference>
<dbReference type="InterPro" id="IPR012721">
    <property type="entry name" value="Chap_CCT_theta"/>
</dbReference>
<dbReference type="InterPro" id="IPR017998">
    <property type="entry name" value="Chaperone_TCP-1"/>
</dbReference>
<dbReference type="InterPro" id="IPR002194">
    <property type="entry name" value="Chaperonin_TCP-1_CS"/>
</dbReference>
<dbReference type="InterPro" id="IPR002423">
    <property type="entry name" value="Cpn60/GroEL/TCP-1"/>
</dbReference>
<dbReference type="InterPro" id="IPR027409">
    <property type="entry name" value="GroEL-like_apical_dom_sf"/>
</dbReference>
<dbReference type="InterPro" id="IPR027413">
    <property type="entry name" value="GROEL-like_equatorial_sf"/>
</dbReference>
<dbReference type="InterPro" id="IPR027410">
    <property type="entry name" value="TCP-1-like_intermed_sf"/>
</dbReference>
<dbReference type="NCBIfam" id="TIGR02346">
    <property type="entry name" value="chap_CCT_theta"/>
    <property type="match status" value="1"/>
</dbReference>
<dbReference type="PANTHER" id="PTHR11353">
    <property type="entry name" value="CHAPERONIN"/>
    <property type="match status" value="1"/>
</dbReference>
<dbReference type="Pfam" id="PF00118">
    <property type="entry name" value="Cpn60_TCP1"/>
    <property type="match status" value="1"/>
</dbReference>
<dbReference type="PRINTS" id="PR00304">
    <property type="entry name" value="TCOMPLEXTCP1"/>
</dbReference>
<dbReference type="SUPFAM" id="SSF52029">
    <property type="entry name" value="GroEL apical domain-like"/>
    <property type="match status" value="1"/>
</dbReference>
<dbReference type="SUPFAM" id="SSF48592">
    <property type="entry name" value="GroEL equatorial domain-like"/>
    <property type="match status" value="1"/>
</dbReference>
<dbReference type="SUPFAM" id="SSF54849">
    <property type="entry name" value="GroEL-intermediate domain like"/>
    <property type="match status" value="1"/>
</dbReference>
<dbReference type="PROSITE" id="PS00750">
    <property type="entry name" value="TCP1_1"/>
    <property type="match status" value="1"/>
</dbReference>
<dbReference type="PROSITE" id="PS00751">
    <property type="entry name" value="TCP1_2"/>
    <property type="match status" value="1"/>
</dbReference>
<dbReference type="PROSITE" id="PS00995">
    <property type="entry name" value="TCP1_3"/>
    <property type="match status" value="1"/>
</dbReference>
<accession>P47079</accession>
<accession>D6VWG8</accession>
<feature type="chain" id="PRO_0000128378" description="T-complex protein 1 subunit theta">
    <location>
        <begin position="1"/>
        <end position="568"/>
    </location>
</feature>
<feature type="modified residue" description="Phosphoserine" evidence="4">
    <location>
        <position position="505"/>
    </location>
</feature>
<feature type="cross-link" description="Glycyl lysine isopeptide (Lys-Gly) (interchain with G-Cter in ubiquitin)" evidence="2">
    <location>
        <position position="15"/>
    </location>
</feature>
<feature type="helix" evidence="5">
    <location>
        <begin position="9"/>
        <end position="12"/>
    </location>
</feature>
<feature type="strand" evidence="7">
    <location>
        <begin position="19"/>
        <end position="23"/>
    </location>
</feature>
<feature type="turn" evidence="7">
    <location>
        <begin position="24"/>
        <end position="26"/>
    </location>
</feature>
<feature type="helix" evidence="5">
    <location>
        <begin position="30"/>
        <end position="34"/>
    </location>
</feature>
<feature type="helix" evidence="5">
    <location>
        <begin position="36"/>
        <end position="43"/>
    </location>
</feature>
<feature type="strand" evidence="5">
    <location>
        <begin position="52"/>
        <end position="56"/>
    </location>
</feature>
<feature type="strand" evidence="6">
    <location>
        <begin position="58"/>
        <end position="60"/>
    </location>
</feature>
<feature type="strand" evidence="5">
    <location>
        <begin position="62"/>
        <end position="65"/>
    </location>
</feature>
<feature type="helix" evidence="5">
    <location>
        <begin position="68"/>
        <end position="74"/>
    </location>
</feature>
<feature type="helix" evidence="5">
    <location>
        <begin position="80"/>
        <end position="94"/>
    </location>
</feature>
<feature type="helix" evidence="5">
    <location>
        <begin position="100"/>
        <end position="119"/>
    </location>
</feature>
<feature type="helix" evidence="5">
    <location>
        <begin position="124"/>
        <end position="141"/>
    </location>
</feature>
<feature type="helix" evidence="5">
    <location>
        <begin position="156"/>
        <end position="160"/>
    </location>
</feature>
<feature type="helix" evidence="5">
    <location>
        <begin position="163"/>
        <end position="169"/>
    </location>
</feature>
<feature type="turn" evidence="5">
    <location>
        <begin position="170"/>
        <end position="173"/>
    </location>
</feature>
<feature type="helix" evidence="5">
    <location>
        <begin position="176"/>
        <end position="189"/>
    </location>
</feature>
<feature type="strand" evidence="5">
    <location>
        <begin position="209"/>
        <end position="215"/>
    </location>
</feature>
<feature type="helix" evidence="5">
    <location>
        <begin position="217"/>
        <end position="219"/>
    </location>
</feature>
<feature type="strand" evidence="5">
    <location>
        <begin position="222"/>
        <end position="225"/>
    </location>
</feature>
<feature type="turn" evidence="5">
    <location>
        <begin position="239"/>
        <end position="242"/>
    </location>
</feature>
<feature type="strand" evidence="5">
    <location>
        <begin position="244"/>
        <end position="252"/>
    </location>
</feature>
<feature type="strand" evidence="5">
    <location>
        <begin position="267"/>
        <end position="269"/>
    </location>
</feature>
<feature type="helix" evidence="5">
    <location>
        <begin position="271"/>
        <end position="293"/>
    </location>
</feature>
<feature type="strand" evidence="5">
    <location>
        <begin position="296"/>
        <end position="303"/>
    </location>
</feature>
<feature type="helix" evidence="5">
    <location>
        <begin position="307"/>
        <end position="315"/>
    </location>
</feature>
<feature type="strand" evidence="5">
    <location>
        <begin position="319"/>
        <end position="321"/>
    </location>
</feature>
<feature type="helix" evidence="5">
    <location>
        <begin position="329"/>
        <end position="336"/>
    </location>
</feature>
<feature type="strand" evidence="5">
    <location>
        <begin position="341"/>
        <end position="343"/>
    </location>
</feature>
<feature type="helix" evidence="5">
    <location>
        <begin position="349"/>
        <end position="351"/>
    </location>
</feature>
<feature type="strand" evidence="5">
    <location>
        <begin position="353"/>
        <end position="356"/>
    </location>
</feature>
<feature type="strand" evidence="5">
    <location>
        <begin position="359"/>
        <end position="370"/>
    </location>
</feature>
<feature type="strand" evidence="5">
    <location>
        <begin position="374"/>
        <end position="376"/>
    </location>
</feature>
<feature type="strand" evidence="5">
    <location>
        <begin position="383"/>
        <end position="389"/>
    </location>
</feature>
<feature type="helix" evidence="5">
    <location>
        <begin position="391"/>
        <end position="412"/>
    </location>
</feature>
<feature type="strand" evidence="5">
    <location>
        <begin position="413"/>
        <end position="415"/>
    </location>
</feature>
<feature type="strand" evidence="7">
    <location>
        <begin position="419"/>
        <end position="421"/>
    </location>
</feature>
<feature type="turn" evidence="5">
    <location>
        <begin position="422"/>
        <end position="424"/>
    </location>
</feature>
<feature type="helix" evidence="5">
    <location>
        <begin position="425"/>
        <end position="440"/>
    </location>
</feature>
<feature type="helix" evidence="5">
    <location>
        <begin position="446"/>
        <end position="454"/>
    </location>
</feature>
<feature type="helix" evidence="5">
    <location>
        <begin position="455"/>
        <end position="457"/>
    </location>
</feature>
<feature type="helix" evidence="5">
    <location>
        <begin position="458"/>
        <end position="465"/>
    </location>
</feature>
<feature type="turn" evidence="5">
    <location>
        <begin position="466"/>
        <end position="468"/>
    </location>
</feature>
<feature type="turn" evidence="5">
    <location>
        <begin position="471"/>
        <end position="473"/>
    </location>
</feature>
<feature type="helix" evidence="5">
    <location>
        <begin position="474"/>
        <end position="481"/>
    </location>
</feature>
<feature type="strand" evidence="5">
    <location>
        <begin position="488"/>
        <end position="490"/>
    </location>
</feature>
<feature type="strand" evidence="5">
    <location>
        <begin position="494"/>
        <end position="496"/>
    </location>
</feature>
<feature type="helix" evidence="5">
    <location>
        <begin position="505"/>
        <end position="507"/>
    </location>
</feature>
<feature type="helix" evidence="5">
    <location>
        <begin position="512"/>
        <end position="515"/>
    </location>
</feature>
<feature type="strand" evidence="7">
    <location>
        <begin position="518"/>
        <end position="520"/>
    </location>
</feature>
<feature type="helix" evidence="5">
    <location>
        <begin position="521"/>
        <end position="540"/>
    </location>
</feature>
<feature type="strand" evidence="5">
    <location>
        <begin position="543"/>
        <end position="545"/>
    </location>
</feature>
<evidence type="ECO:0000250" key="1"/>
<evidence type="ECO:0000269" key="2">
    <source>
    </source>
</evidence>
<evidence type="ECO:0000305" key="3"/>
<evidence type="ECO:0007744" key="4">
    <source>
    </source>
</evidence>
<evidence type="ECO:0007829" key="5">
    <source>
        <dbReference type="PDB" id="6KS6"/>
    </source>
</evidence>
<evidence type="ECO:0007829" key="6">
    <source>
        <dbReference type="PDB" id="7YLW"/>
    </source>
</evidence>
<evidence type="ECO:0007829" key="7">
    <source>
        <dbReference type="PDB" id="7YLY"/>
    </source>
</evidence>
<protein>
    <recommendedName>
        <fullName>T-complex protein 1 subunit theta</fullName>
        <shortName>TCP-1-theta</shortName>
    </recommendedName>
    <alternativeName>
        <fullName>CCT-theta</fullName>
    </alternativeName>
</protein>
<keyword id="KW-0002">3D-structure</keyword>
<keyword id="KW-0067">ATP-binding</keyword>
<keyword id="KW-0143">Chaperone</keyword>
<keyword id="KW-0963">Cytoplasm</keyword>
<keyword id="KW-1017">Isopeptide bond</keyword>
<keyword id="KW-0547">Nucleotide-binding</keyword>
<keyword id="KW-0597">Phosphoprotein</keyword>
<keyword id="KW-1185">Reference proteome</keyword>
<keyword id="KW-0832">Ubl conjugation</keyword>
<organism>
    <name type="scientific">Saccharomyces cerevisiae (strain ATCC 204508 / S288c)</name>
    <name type="common">Baker's yeast</name>
    <dbReference type="NCBI Taxonomy" id="559292"/>
    <lineage>
        <taxon>Eukaryota</taxon>
        <taxon>Fungi</taxon>
        <taxon>Dikarya</taxon>
        <taxon>Ascomycota</taxon>
        <taxon>Saccharomycotina</taxon>
        <taxon>Saccharomycetes</taxon>
        <taxon>Saccharomycetales</taxon>
        <taxon>Saccharomycetaceae</taxon>
        <taxon>Saccharomyces</taxon>
    </lineage>
</organism>
<sequence length="568" mass="61662">MSLRLPQNPNAGLFKQGYNSYSNADGQIIKSIAAIRELHQMCLTSMGPCGRNKIIVNHLGKIIITNDAATMLRELDIVHPAVKVLVMATEQQKIDMGDGTNLVMILAGELLNVSEKLISMGLSAVEIIQGYNMARKFTLKELDEMVVGEITDKNDKNELLKMIKPVISSKKYGSEDILSELVSEAVSHVLPVAQQAGEIPYFNVDSIRVVKIMGGSLSNSTVIKGMVFNREPEGHVKSLSEDKKHKVAVFTCPLDIANTETKGTVLLHNAQEMLDFSKGEEKQIDAMMKEIADMGVECIVAGAGVGELALHYLNRYGILVLKVPSKFELRRLCRVCGATPLPRLGAPTPEELGLVETVKTMEIGGDRVTVFKQEQGEISRTSTIILRGATQNNLDDIERAIDDGVAAVKGLMKPSGGKLLPGAGATEIELISRITKYGERTPGLLQLAIKQFAVAFEVVPRTLAETAGLDVNEVLPNLYAAHNVTEPGAVKTDHLYKGVDIDGESDEGVKDIREENIYDMLATKKFAINVATEAATTVLSIDQIIMAKKAGGPRAPQGPRPGNWDQED</sequence>
<proteinExistence type="evidence at protein level"/>
<name>TCPQ_YEAST</name>
<comment type="function">
    <text evidence="1">Molecular chaperone; assists the folding of proteins upon ATP hydrolysis. Known to play a role, in vitro, in the folding of actin and tubulin. In yeast may play a role in mitotic spindle formation (By similarity).</text>
</comment>
<comment type="subunit">
    <text evidence="1">Heterooligomeric complex of about 850 to 900 kDa that forms two stacked rings, 12 to 16 nm in diameter.</text>
</comment>
<comment type="subcellular location">
    <subcellularLocation>
        <location evidence="1">Cytoplasm</location>
    </subcellularLocation>
</comment>
<comment type="similarity">
    <text evidence="3">Belongs to the TCP-1 chaperonin family.</text>
</comment>
<reference key="1">
    <citation type="journal article" date="1996" name="EMBO J.">
        <title>Complete nucleotide sequence of Saccharomyces cerevisiae chromosome X.</title>
        <authorList>
            <person name="Galibert F."/>
            <person name="Alexandraki D."/>
            <person name="Baur A."/>
            <person name="Boles E."/>
            <person name="Chalwatzis N."/>
            <person name="Chuat J.-C."/>
            <person name="Coster F."/>
            <person name="Cziepluch C."/>
            <person name="de Haan M."/>
            <person name="Domdey H."/>
            <person name="Durand P."/>
            <person name="Entian K.-D."/>
            <person name="Gatius M."/>
            <person name="Goffeau A."/>
            <person name="Grivell L.A."/>
            <person name="Hennemann A."/>
            <person name="Herbert C.J."/>
            <person name="Heumann K."/>
            <person name="Hilger F."/>
            <person name="Hollenberg C.P."/>
            <person name="Huang M.-E."/>
            <person name="Jacq C."/>
            <person name="Jauniaux J.-C."/>
            <person name="Katsoulou C."/>
            <person name="Kirchrath L."/>
            <person name="Kleine K."/>
            <person name="Kordes E."/>
            <person name="Koetter P."/>
            <person name="Liebl S."/>
            <person name="Louis E.J."/>
            <person name="Manus V."/>
            <person name="Mewes H.-W."/>
            <person name="Miosga T."/>
            <person name="Obermaier B."/>
            <person name="Perea J."/>
            <person name="Pohl T.M."/>
            <person name="Portetelle D."/>
            <person name="Pujol A."/>
            <person name="Purnelle B."/>
            <person name="Ramezani Rad M."/>
            <person name="Rasmussen S.W."/>
            <person name="Rose M."/>
            <person name="Rossau R."/>
            <person name="Schaaff-Gerstenschlaeger I."/>
            <person name="Smits P.H.M."/>
            <person name="Scarcez T."/>
            <person name="Soriano N."/>
            <person name="To Van D."/>
            <person name="Tzermia M."/>
            <person name="Van Broekhoven A."/>
            <person name="Vandenbol M."/>
            <person name="Wedler H."/>
            <person name="von Wettstein D."/>
            <person name="Wambutt R."/>
            <person name="Zagulski M."/>
            <person name="Zollner A."/>
            <person name="Karpfinger-Hartl L."/>
        </authorList>
    </citation>
    <scope>NUCLEOTIDE SEQUENCE [LARGE SCALE GENOMIC DNA]</scope>
    <source>
        <strain>ATCC 204508 / S288c</strain>
    </source>
</reference>
<reference key="2">
    <citation type="journal article" date="2014" name="G3 (Bethesda)">
        <title>The reference genome sequence of Saccharomyces cerevisiae: Then and now.</title>
        <authorList>
            <person name="Engel S.R."/>
            <person name="Dietrich F.S."/>
            <person name="Fisk D.G."/>
            <person name="Binkley G."/>
            <person name="Balakrishnan R."/>
            <person name="Costanzo M.C."/>
            <person name="Dwight S.S."/>
            <person name="Hitz B.C."/>
            <person name="Karra K."/>
            <person name="Nash R.S."/>
            <person name="Weng S."/>
            <person name="Wong E.D."/>
            <person name="Lloyd P."/>
            <person name="Skrzypek M.S."/>
            <person name="Miyasato S.R."/>
            <person name="Simison M."/>
            <person name="Cherry J.M."/>
        </authorList>
    </citation>
    <scope>GENOME REANNOTATION</scope>
    <source>
        <strain>ATCC 204508 / S288c</strain>
    </source>
</reference>
<reference key="3">
    <citation type="journal article" date="2003" name="Nat. Biotechnol.">
        <title>A proteomics approach to understanding protein ubiquitination.</title>
        <authorList>
            <person name="Peng J."/>
            <person name="Schwartz D."/>
            <person name="Elias J.E."/>
            <person name="Thoreen C.C."/>
            <person name="Cheng D."/>
            <person name="Marsischky G."/>
            <person name="Roelofs J."/>
            <person name="Finley D."/>
            <person name="Gygi S.P."/>
        </authorList>
    </citation>
    <scope>UBIQUITINATION [LARGE SCALE ANALYSIS] AT LYS-15</scope>
    <scope>IDENTIFICATION BY MASS SPECTROMETRY</scope>
    <source>
        <strain>SUB592</strain>
    </source>
</reference>
<reference key="4">
    <citation type="journal article" date="2009" name="Science">
        <title>Global analysis of Cdk1 substrate phosphorylation sites provides insights into evolution.</title>
        <authorList>
            <person name="Holt L.J."/>
            <person name="Tuch B.B."/>
            <person name="Villen J."/>
            <person name="Johnson A.D."/>
            <person name="Gygi S.P."/>
            <person name="Morgan D.O."/>
        </authorList>
    </citation>
    <scope>PHOSPHORYLATION [LARGE SCALE ANALYSIS] AT SER-505</scope>
    <scope>IDENTIFICATION BY MASS SPECTROMETRY [LARGE SCALE ANALYSIS]</scope>
</reference>